<evidence type="ECO:0000269" key="1">
    <source>
    </source>
</evidence>
<evidence type="ECO:0000305" key="2"/>
<protein>
    <recommendedName>
        <fullName>2-aminophenol 1,6-dioxygenase alpha subunit</fullName>
    </recommendedName>
</protein>
<proteinExistence type="evidence at protein level"/>
<dbReference type="EMBL" id="AB020521">
    <property type="protein sequence ID" value="BAB03532.1"/>
    <property type="molecule type" value="Genomic_DNA"/>
</dbReference>
<dbReference type="PDB" id="8IHG">
    <property type="method" value="X-ray"/>
    <property type="resolution" value="2.86 A"/>
    <property type="chains" value="B/D=2-271"/>
</dbReference>
<dbReference type="PDBsum" id="8IHG"/>
<dbReference type="SMR" id="O33478"/>
<dbReference type="BioCyc" id="MetaCyc:MONOMER-14739"/>
<dbReference type="SABIO-RK" id="O33478"/>
<dbReference type="GO" id="GO:0008198">
    <property type="term" value="F:ferrous iron binding"/>
    <property type="evidence" value="ECO:0007669"/>
    <property type="project" value="InterPro"/>
</dbReference>
<dbReference type="GO" id="GO:0016702">
    <property type="term" value="F:oxidoreductase activity, acting on single donors with incorporation of molecular oxygen, incorporation of two atoms of oxygen"/>
    <property type="evidence" value="ECO:0007669"/>
    <property type="project" value="UniProtKB-ARBA"/>
</dbReference>
<dbReference type="GO" id="GO:0009056">
    <property type="term" value="P:catabolic process"/>
    <property type="evidence" value="ECO:0007669"/>
    <property type="project" value="UniProtKB-KW"/>
</dbReference>
<dbReference type="Gene3D" id="3.40.830.10">
    <property type="entry name" value="LigB-like"/>
    <property type="match status" value="1"/>
</dbReference>
<dbReference type="InterPro" id="IPR004183">
    <property type="entry name" value="Xdiol_dOase_suB"/>
</dbReference>
<dbReference type="Pfam" id="PF02900">
    <property type="entry name" value="LigB"/>
    <property type="match status" value="1"/>
</dbReference>
<dbReference type="SUPFAM" id="SSF53213">
    <property type="entry name" value="LigB-like"/>
    <property type="match status" value="1"/>
</dbReference>
<organism>
    <name type="scientific">Pseudomonas sp</name>
    <dbReference type="NCBI Taxonomy" id="306"/>
    <lineage>
        <taxon>Bacteria</taxon>
        <taxon>Pseudomonadati</taxon>
        <taxon>Pseudomonadota</taxon>
        <taxon>Gammaproteobacteria</taxon>
        <taxon>Pseudomonadales</taxon>
        <taxon>Pseudomonadaceae</taxon>
        <taxon>Pseudomonas</taxon>
    </lineage>
</organism>
<name>AMNA_PSESP</name>
<accession>O33478</accession>
<sequence length="271" mass="29416">MTIVSAFLVPGSPLPHLRPDVKSWESFKVAMQNVGEKLRASKPDVVLIYSTQWFAVLDEIWLTRQRSLDIHVDENWHEFGELPYDIYSDVDLANACIESCRAAGVNARGADYESFPIDTGTIVACNALKVGTSDLPVVVASNNLYDDQAATERLAALAVACISEKGKRIAVIGVGGLSGSVFTTAIDPAEDRVVKAVEDDCNKNILSLMESGNIQALREALKSYSKEARAEMGFKHFHWLLGALDGHFKGATVHHYGALYGSGAAVVEFSI</sequence>
<gene>
    <name type="primary">amnA</name>
</gene>
<comment type="function">
    <text evidence="1">Component of the 2-aminophenol 1,6-dioxygenase complex that catalyzes the ring fission of 2-aminophenol to produce 2-aminomuconic 6-semialdehyde. AmnA seems to have a role in the stability of the complex.</text>
</comment>
<comment type="subunit">
    <text evidence="1">Heterotetramer of 2 alpha and 2 beta subunits.</text>
</comment>
<comment type="similarity">
    <text evidence="2">Belongs to the LigB/MhpB extradiol dioxygenase family.</text>
</comment>
<comment type="caution">
    <text evidence="2">In contrast to other members of the family, lacks the conserved iron-binding sites, suggesting it has no oxidoreductase activity.</text>
</comment>
<keyword id="KW-0002">3D-structure</keyword>
<keyword id="KW-0058">Aromatic hydrocarbons catabolism</keyword>
<keyword id="KW-0903">Direct protein sequencing</keyword>
<reference key="1">
    <citation type="journal article" date="1997" name="J. Biol. Chem.">
        <title>Novel genes encoding 2-aminophenol 1,6-dioxygenase from Pseudomonas species AP-3 growing on 2-aminophenol and catalytic properties of the purified enzyme.</title>
        <authorList>
            <person name="Takenaka S."/>
            <person name="Murakami S."/>
            <person name="Shinke R."/>
            <person name="Hatakeyama K."/>
            <person name="Yukawa H."/>
            <person name="Aoki K."/>
        </authorList>
    </citation>
    <scope>NUCLEOTIDE SEQUENCE [GENOMIC DNA]</scope>
    <scope>PROTEIN SEQUENCE OF 2-30</scope>
    <scope>FUNCTION</scope>
    <scope>SUBUNIT</scope>
    <source>
        <strain>AP-3</strain>
    </source>
</reference>
<reference key="2">
    <citation type="journal article" date="2000" name="Arch. Microbiol.">
        <title>Complete nucleotide sequence and functional analysis of the genes for 2-aminophenol metabolism from Pseudomonas sp. AP-3.</title>
        <authorList>
            <person name="Takenaka S."/>
            <person name="Murakami S."/>
            <person name="Kim Y.J."/>
            <person name="Aoki K."/>
        </authorList>
    </citation>
    <scope>NUCLEOTIDE SEQUENCE [GENOMIC DNA]</scope>
    <source>
        <strain>AP-3</strain>
    </source>
</reference>
<feature type="initiator methionine" description="Removed" evidence="1">
    <location>
        <position position="1"/>
    </location>
</feature>
<feature type="chain" id="PRO_0000383021" description="2-aminophenol 1,6-dioxygenase alpha subunit">
    <location>
        <begin position="2"/>
        <end position="271"/>
    </location>
</feature>